<gene>
    <name evidence="10" type="primary">Gyg1</name>
    <name evidence="10" type="synonym">Gyg</name>
</gene>
<accession>Q9R062</accession>
<accession>Q3TWR9</accession>
<evidence type="ECO:0000250" key="1">
    <source>
        <dbReference type="UniProtKB" id="C4R941"/>
    </source>
</evidence>
<evidence type="ECO:0000250" key="2">
    <source>
        <dbReference type="UniProtKB" id="P13280"/>
    </source>
</evidence>
<evidence type="ECO:0000250" key="3">
    <source>
        <dbReference type="UniProtKB" id="P46976"/>
    </source>
</evidence>
<evidence type="ECO:0000256" key="4">
    <source>
        <dbReference type="SAM" id="MobiDB-lite"/>
    </source>
</evidence>
<evidence type="ECO:0000269" key="5">
    <source>
    </source>
</evidence>
<evidence type="ECO:0000269" key="6">
    <source>
    </source>
</evidence>
<evidence type="ECO:0000305" key="7"/>
<evidence type="ECO:0000305" key="8">
    <source>
    </source>
</evidence>
<evidence type="ECO:0000312" key="9">
    <source>
        <dbReference type="EMBL" id="BAE35197.1"/>
    </source>
</evidence>
<evidence type="ECO:0000312" key="10">
    <source>
        <dbReference type="MGI" id="MGI:1351614"/>
    </source>
</evidence>
<organism>
    <name type="scientific">Mus musculus</name>
    <name type="common">Mouse</name>
    <dbReference type="NCBI Taxonomy" id="10090"/>
    <lineage>
        <taxon>Eukaryota</taxon>
        <taxon>Metazoa</taxon>
        <taxon>Chordata</taxon>
        <taxon>Craniata</taxon>
        <taxon>Vertebrata</taxon>
        <taxon>Euteleostomi</taxon>
        <taxon>Mammalia</taxon>
        <taxon>Eutheria</taxon>
        <taxon>Euarchontoglires</taxon>
        <taxon>Glires</taxon>
        <taxon>Rodentia</taxon>
        <taxon>Myomorpha</taxon>
        <taxon>Muroidea</taxon>
        <taxon>Muridae</taxon>
        <taxon>Murinae</taxon>
        <taxon>Mus</taxon>
        <taxon>Mus</taxon>
    </lineage>
</organism>
<dbReference type="EC" id="2.4.1.186" evidence="3"/>
<dbReference type="EMBL" id="AF114031">
    <property type="protein sequence ID" value="AAD48901.1"/>
    <property type="molecule type" value="mRNA"/>
</dbReference>
<dbReference type="EMBL" id="AK159576">
    <property type="protein sequence ID" value="BAE35197.1"/>
    <property type="molecule type" value="mRNA"/>
</dbReference>
<dbReference type="EMBL" id="CH466530">
    <property type="protein sequence ID" value="EDL34894.1"/>
    <property type="molecule type" value="Genomic_DNA"/>
</dbReference>
<dbReference type="EMBL" id="BC029903">
    <property type="protein sequence ID" value="AAH29903.1"/>
    <property type="molecule type" value="mRNA"/>
</dbReference>
<dbReference type="CCDS" id="CCDS50873.1"/>
<dbReference type="RefSeq" id="NP_038783.1">
    <property type="nucleotide sequence ID" value="NM_013755.5"/>
</dbReference>
<dbReference type="SMR" id="Q9R062"/>
<dbReference type="BioGRID" id="205166">
    <property type="interactions" value="8"/>
</dbReference>
<dbReference type="FunCoup" id="Q9R062">
    <property type="interactions" value="851"/>
</dbReference>
<dbReference type="IntAct" id="Q9R062">
    <property type="interactions" value="1"/>
</dbReference>
<dbReference type="STRING" id="10090.ENSMUSP00000136035"/>
<dbReference type="CAZy" id="GT8">
    <property type="family name" value="Glycosyltransferase Family 8"/>
</dbReference>
<dbReference type="GlyCosmos" id="Q9R062">
    <property type="glycosylation" value="1 site, No reported glycans"/>
</dbReference>
<dbReference type="GlyGen" id="Q9R062">
    <property type="glycosylation" value="2 sites, 1 O-linked glycan (1 site)"/>
</dbReference>
<dbReference type="iPTMnet" id="Q9R062"/>
<dbReference type="PhosphoSitePlus" id="Q9R062"/>
<dbReference type="REPRODUCTION-2DPAGE" id="Q9R062"/>
<dbReference type="jPOST" id="Q9R062"/>
<dbReference type="PaxDb" id="10090-ENSMUSP00000114019"/>
<dbReference type="PeptideAtlas" id="Q9R062"/>
<dbReference type="ProteomicsDB" id="267636"/>
<dbReference type="Pumba" id="Q9R062"/>
<dbReference type="Antibodypedia" id="33551">
    <property type="antibodies" value="201 antibodies from 29 providers"/>
</dbReference>
<dbReference type="DNASU" id="27357"/>
<dbReference type="Ensembl" id="ENSMUST00000178328.8">
    <property type="protein sequence ID" value="ENSMUSP00000136035.2"/>
    <property type="gene ID" value="ENSMUSG00000019528.19"/>
</dbReference>
<dbReference type="GeneID" id="27357"/>
<dbReference type="KEGG" id="mmu:27357"/>
<dbReference type="UCSC" id="uc056zrp.1">
    <property type="organism name" value="mouse"/>
</dbReference>
<dbReference type="AGR" id="MGI:1351614"/>
<dbReference type="CTD" id="2992"/>
<dbReference type="MGI" id="MGI:1351614">
    <property type="gene designation" value="Gyg1"/>
</dbReference>
<dbReference type="VEuPathDB" id="HostDB:ENSMUSG00000019528"/>
<dbReference type="eggNOG" id="KOG1950">
    <property type="taxonomic scope" value="Eukaryota"/>
</dbReference>
<dbReference type="GeneTree" id="ENSGT00940000154674"/>
<dbReference type="HOGENOM" id="CLU_017171_0_0_1"/>
<dbReference type="InParanoid" id="Q9R062"/>
<dbReference type="OMA" id="MSQFAWV"/>
<dbReference type="PhylomeDB" id="Q9R062"/>
<dbReference type="BRENDA" id="2.4.1.186">
    <property type="organism ID" value="3474"/>
</dbReference>
<dbReference type="Reactome" id="R-MMU-3322077">
    <property type="pathway name" value="Glycogen synthesis"/>
</dbReference>
<dbReference type="Reactome" id="R-MMU-6798695">
    <property type="pathway name" value="Neutrophil degranulation"/>
</dbReference>
<dbReference type="Reactome" id="R-MMU-70221">
    <property type="pathway name" value="Glycogen breakdown (glycogenolysis)"/>
</dbReference>
<dbReference type="UniPathway" id="UPA00164"/>
<dbReference type="BioGRID-ORCS" id="27357">
    <property type="hits" value="2 hits in 79 CRISPR screens"/>
</dbReference>
<dbReference type="ChiTaRS" id="Gyg">
    <property type="organism name" value="mouse"/>
</dbReference>
<dbReference type="PRO" id="PR:Q9R062"/>
<dbReference type="Proteomes" id="UP000000589">
    <property type="component" value="Chromosome 3"/>
</dbReference>
<dbReference type="RNAct" id="Q9R062">
    <property type="molecule type" value="protein"/>
</dbReference>
<dbReference type="Bgee" id="ENSMUSG00000019528">
    <property type="expression patterns" value="Expressed in endocardial cushion and 260 other cell types or tissues"/>
</dbReference>
<dbReference type="ExpressionAtlas" id="Q9R062">
    <property type="expression patterns" value="baseline and differential"/>
</dbReference>
<dbReference type="GO" id="GO:0005737">
    <property type="term" value="C:cytoplasm"/>
    <property type="evidence" value="ECO:0000250"/>
    <property type="project" value="UniProtKB"/>
</dbReference>
<dbReference type="GO" id="GO:0005634">
    <property type="term" value="C:nucleus"/>
    <property type="evidence" value="ECO:0007669"/>
    <property type="project" value="UniProtKB-SubCell"/>
</dbReference>
<dbReference type="GO" id="GO:0008466">
    <property type="term" value="F:glycogenin glucosyltransferase activity"/>
    <property type="evidence" value="ECO:0000315"/>
    <property type="project" value="MGI"/>
</dbReference>
<dbReference type="GO" id="GO:0030145">
    <property type="term" value="F:manganese ion binding"/>
    <property type="evidence" value="ECO:0000250"/>
    <property type="project" value="UniProtKB"/>
</dbReference>
<dbReference type="GO" id="GO:0042803">
    <property type="term" value="F:protein homodimerization activity"/>
    <property type="evidence" value="ECO:0000250"/>
    <property type="project" value="UniProtKB"/>
</dbReference>
<dbReference type="GO" id="GO:0005978">
    <property type="term" value="P:glycogen biosynthetic process"/>
    <property type="evidence" value="ECO:0000315"/>
    <property type="project" value="MGI"/>
</dbReference>
<dbReference type="CDD" id="cd02537">
    <property type="entry name" value="GT8_Glycogenin"/>
    <property type="match status" value="1"/>
</dbReference>
<dbReference type="FunFam" id="3.90.550.10:FF:000025">
    <property type="entry name" value="Glycogenin-1 isoform 1"/>
    <property type="match status" value="1"/>
</dbReference>
<dbReference type="Gene3D" id="3.90.550.10">
    <property type="entry name" value="Spore Coat Polysaccharide Biosynthesis Protein SpsA, Chain A"/>
    <property type="match status" value="1"/>
</dbReference>
<dbReference type="InterPro" id="IPR002495">
    <property type="entry name" value="Glyco_trans_8"/>
</dbReference>
<dbReference type="InterPro" id="IPR050587">
    <property type="entry name" value="GNT1/Glycosyltrans_8"/>
</dbReference>
<dbReference type="InterPro" id="IPR029044">
    <property type="entry name" value="Nucleotide-diphossugar_trans"/>
</dbReference>
<dbReference type="PANTHER" id="PTHR11183">
    <property type="entry name" value="GLYCOGENIN SUBFAMILY MEMBER"/>
    <property type="match status" value="1"/>
</dbReference>
<dbReference type="Pfam" id="PF01501">
    <property type="entry name" value="Glyco_transf_8"/>
    <property type="match status" value="2"/>
</dbReference>
<dbReference type="SUPFAM" id="SSF53448">
    <property type="entry name" value="Nucleotide-diphospho-sugar transferases"/>
    <property type="match status" value="1"/>
</dbReference>
<proteinExistence type="evidence at protein level"/>
<comment type="function">
    <text evidence="2 3">Glycogenin participates in the glycogen biosynthetic process along with glycogen synthase and glycogen branching enzyme. It catalyzes the formation of a short alpha (1,4)-glucosyl chain covalently attached via a glucose 1-O-tyrosyl linkage to internal tyrosine residues and these chains act as primers for the elongation reaction catalyzed by glycogen synthase.</text>
</comment>
<comment type="catalytic activity">
    <reaction evidence="3">
        <text>L-tyrosyl-[glycogenin] + UDP-alpha-D-glucose = alpha-D-glucosyl-L-tyrosyl-[glycogenin] + UDP + H(+)</text>
        <dbReference type="Rhea" id="RHEA:23360"/>
        <dbReference type="Rhea" id="RHEA-COMP:14604"/>
        <dbReference type="Rhea" id="RHEA-COMP:14605"/>
        <dbReference type="ChEBI" id="CHEBI:15378"/>
        <dbReference type="ChEBI" id="CHEBI:46858"/>
        <dbReference type="ChEBI" id="CHEBI:58223"/>
        <dbReference type="ChEBI" id="CHEBI:58885"/>
        <dbReference type="ChEBI" id="CHEBI:140573"/>
        <dbReference type="EC" id="2.4.1.186"/>
    </reaction>
    <physiologicalReaction direction="left-to-right" evidence="2 3">
        <dbReference type="Rhea" id="RHEA:23361"/>
    </physiologicalReaction>
</comment>
<comment type="catalytic activity">
    <reaction evidence="3">
        <text>[1,4-alpha-D-glucosyl](n)-L-tyrosyl-[glycogenin] + UDP-alpha-D-glucose = [1,4-alpha-D-glucosyl](n+1)-L-tyrosyl-[glycogenin] + UDP + H(+)</text>
        <dbReference type="Rhea" id="RHEA:56560"/>
        <dbReference type="Rhea" id="RHEA-COMP:14606"/>
        <dbReference type="Rhea" id="RHEA-COMP:14607"/>
        <dbReference type="ChEBI" id="CHEBI:15378"/>
        <dbReference type="ChEBI" id="CHEBI:58223"/>
        <dbReference type="ChEBI" id="CHEBI:58885"/>
        <dbReference type="ChEBI" id="CHEBI:140574"/>
        <dbReference type="EC" id="2.4.1.186"/>
    </reaction>
    <physiologicalReaction direction="left-to-right" evidence="2 3">
        <dbReference type="Rhea" id="RHEA:56561"/>
    </physiologicalReaction>
</comment>
<comment type="cofactor">
    <cofactor evidence="2">
        <name>Mn(2+)</name>
        <dbReference type="ChEBI" id="CHEBI:29035"/>
    </cofactor>
    <text evidence="2">Divalent metal ions. Required for self-glucosylation. Manganese is the most effective.</text>
</comment>
<comment type="pathway">
    <text evidence="3">Glycan biosynthesis; glycogen biosynthesis.</text>
</comment>
<comment type="subunit">
    <text evidence="3 8">Part of the GYS1-GYG1 complex, a heterooctamer composed of a tetramer of GYS1 and 2 dimers of GYG1, where each GYS1 protomer binds to one GYG1 subunit (via GYG1 C-terminus); the GYS1 tetramer may dissociate from GYG1 dimers to continue glycogen polymerization on its own (By similarity). May also form a heterooctamer complex with GYS2 (Probable).</text>
</comment>
<comment type="subcellular location">
    <subcellularLocation>
        <location evidence="2">Cytoplasm</location>
    </subcellularLocation>
    <subcellularLocation>
        <location evidence="2">Nucleus</location>
    </subcellularLocation>
    <text evidence="1 2">Localizes to glycogen granules (glycosomes) in the cytoplasm (By similarity). Cytosolic localization is dependent on the actin cytoskeleton (By similarity).</text>
</comment>
<comment type="tissue specificity">
    <text evidence="5">Skeletal muscle, heart, to a lesser extent in kidney, lung and brain.</text>
</comment>
<comment type="PTM">
    <text evidence="2">Self-glycosylated by the transfer of glucose residues from UDP-glucose to itself, forming an alpha-1,4-glycan of around 10 residues attached to Tyr-195.</text>
</comment>
<comment type="PTM">
    <text evidence="2">Phosphorylated.</text>
</comment>
<comment type="similarity">
    <text evidence="7">Belongs to the glycosyltransferase 8 family. Glycogenin subfamily.</text>
</comment>
<protein>
    <recommendedName>
        <fullName evidence="10">Glycogenin-1</fullName>
        <shortName>GN-1</shortName>
        <shortName>GN1</shortName>
        <ecNumber evidence="3">2.4.1.186</ecNumber>
    </recommendedName>
</protein>
<name>GLYG_MOUSE</name>
<keyword id="KW-0007">Acetylation</keyword>
<keyword id="KW-0963">Cytoplasm</keyword>
<keyword id="KW-0320">Glycogen biosynthesis</keyword>
<keyword id="KW-0325">Glycoprotein</keyword>
<keyword id="KW-0464">Manganese</keyword>
<keyword id="KW-0479">Metal-binding</keyword>
<keyword id="KW-0539">Nucleus</keyword>
<keyword id="KW-0597">Phosphoprotein</keyword>
<keyword id="KW-1185">Reference proteome</keyword>
<keyword id="KW-0808">Transferase</keyword>
<reference key="1">
    <citation type="journal article" date="1999" name="Biochim. Biophys. Acta">
        <title>Characterization of mouse glycogenin-1 cDNA and promoter region.</title>
        <authorList>
            <person name="van Maanen M.-H."/>
            <person name="Fournier P.A."/>
            <person name="Palmer T.N."/>
            <person name="Abraham L.J."/>
        </authorList>
    </citation>
    <scope>NUCLEOTIDE SEQUENCE [MRNA]</scope>
    <scope>TISSUE SPECIFICITY</scope>
    <source>
        <tissue>Skeletal muscle</tissue>
    </source>
</reference>
<reference key="2">
    <citation type="journal article" date="2005" name="Science">
        <title>The transcriptional landscape of the mammalian genome.</title>
        <authorList>
            <person name="Carninci P."/>
            <person name="Kasukawa T."/>
            <person name="Katayama S."/>
            <person name="Gough J."/>
            <person name="Frith M.C."/>
            <person name="Maeda N."/>
            <person name="Oyama R."/>
            <person name="Ravasi T."/>
            <person name="Lenhard B."/>
            <person name="Wells C."/>
            <person name="Kodzius R."/>
            <person name="Shimokawa K."/>
            <person name="Bajic V.B."/>
            <person name="Brenner S.E."/>
            <person name="Batalov S."/>
            <person name="Forrest A.R."/>
            <person name="Zavolan M."/>
            <person name="Davis M.J."/>
            <person name="Wilming L.G."/>
            <person name="Aidinis V."/>
            <person name="Allen J.E."/>
            <person name="Ambesi-Impiombato A."/>
            <person name="Apweiler R."/>
            <person name="Aturaliya R.N."/>
            <person name="Bailey T.L."/>
            <person name="Bansal M."/>
            <person name="Baxter L."/>
            <person name="Beisel K.W."/>
            <person name="Bersano T."/>
            <person name="Bono H."/>
            <person name="Chalk A.M."/>
            <person name="Chiu K.P."/>
            <person name="Choudhary V."/>
            <person name="Christoffels A."/>
            <person name="Clutterbuck D.R."/>
            <person name="Crowe M.L."/>
            <person name="Dalla E."/>
            <person name="Dalrymple B.P."/>
            <person name="de Bono B."/>
            <person name="Della Gatta G."/>
            <person name="di Bernardo D."/>
            <person name="Down T."/>
            <person name="Engstrom P."/>
            <person name="Fagiolini M."/>
            <person name="Faulkner G."/>
            <person name="Fletcher C.F."/>
            <person name="Fukushima T."/>
            <person name="Furuno M."/>
            <person name="Futaki S."/>
            <person name="Gariboldi M."/>
            <person name="Georgii-Hemming P."/>
            <person name="Gingeras T.R."/>
            <person name="Gojobori T."/>
            <person name="Green R.E."/>
            <person name="Gustincich S."/>
            <person name="Harbers M."/>
            <person name="Hayashi Y."/>
            <person name="Hensch T.K."/>
            <person name="Hirokawa N."/>
            <person name="Hill D."/>
            <person name="Huminiecki L."/>
            <person name="Iacono M."/>
            <person name="Ikeo K."/>
            <person name="Iwama A."/>
            <person name="Ishikawa T."/>
            <person name="Jakt M."/>
            <person name="Kanapin A."/>
            <person name="Katoh M."/>
            <person name="Kawasawa Y."/>
            <person name="Kelso J."/>
            <person name="Kitamura H."/>
            <person name="Kitano H."/>
            <person name="Kollias G."/>
            <person name="Krishnan S.P."/>
            <person name="Kruger A."/>
            <person name="Kummerfeld S.K."/>
            <person name="Kurochkin I.V."/>
            <person name="Lareau L.F."/>
            <person name="Lazarevic D."/>
            <person name="Lipovich L."/>
            <person name="Liu J."/>
            <person name="Liuni S."/>
            <person name="McWilliam S."/>
            <person name="Madan Babu M."/>
            <person name="Madera M."/>
            <person name="Marchionni L."/>
            <person name="Matsuda H."/>
            <person name="Matsuzawa S."/>
            <person name="Miki H."/>
            <person name="Mignone F."/>
            <person name="Miyake S."/>
            <person name="Morris K."/>
            <person name="Mottagui-Tabar S."/>
            <person name="Mulder N."/>
            <person name="Nakano N."/>
            <person name="Nakauchi H."/>
            <person name="Ng P."/>
            <person name="Nilsson R."/>
            <person name="Nishiguchi S."/>
            <person name="Nishikawa S."/>
            <person name="Nori F."/>
            <person name="Ohara O."/>
            <person name="Okazaki Y."/>
            <person name="Orlando V."/>
            <person name="Pang K.C."/>
            <person name="Pavan W.J."/>
            <person name="Pavesi G."/>
            <person name="Pesole G."/>
            <person name="Petrovsky N."/>
            <person name="Piazza S."/>
            <person name="Reed J."/>
            <person name="Reid J.F."/>
            <person name="Ring B.Z."/>
            <person name="Ringwald M."/>
            <person name="Rost B."/>
            <person name="Ruan Y."/>
            <person name="Salzberg S.L."/>
            <person name="Sandelin A."/>
            <person name="Schneider C."/>
            <person name="Schoenbach C."/>
            <person name="Sekiguchi K."/>
            <person name="Semple C.A."/>
            <person name="Seno S."/>
            <person name="Sessa L."/>
            <person name="Sheng Y."/>
            <person name="Shibata Y."/>
            <person name="Shimada H."/>
            <person name="Shimada K."/>
            <person name="Silva D."/>
            <person name="Sinclair B."/>
            <person name="Sperling S."/>
            <person name="Stupka E."/>
            <person name="Sugiura K."/>
            <person name="Sultana R."/>
            <person name="Takenaka Y."/>
            <person name="Taki K."/>
            <person name="Tammoja K."/>
            <person name="Tan S.L."/>
            <person name="Tang S."/>
            <person name="Taylor M.S."/>
            <person name="Tegner J."/>
            <person name="Teichmann S.A."/>
            <person name="Ueda H.R."/>
            <person name="van Nimwegen E."/>
            <person name="Verardo R."/>
            <person name="Wei C.L."/>
            <person name="Yagi K."/>
            <person name="Yamanishi H."/>
            <person name="Zabarovsky E."/>
            <person name="Zhu S."/>
            <person name="Zimmer A."/>
            <person name="Hide W."/>
            <person name="Bult C."/>
            <person name="Grimmond S.M."/>
            <person name="Teasdale R.D."/>
            <person name="Liu E.T."/>
            <person name="Brusic V."/>
            <person name="Quackenbush J."/>
            <person name="Wahlestedt C."/>
            <person name="Mattick J.S."/>
            <person name="Hume D.A."/>
            <person name="Kai C."/>
            <person name="Sasaki D."/>
            <person name="Tomaru Y."/>
            <person name="Fukuda S."/>
            <person name="Kanamori-Katayama M."/>
            <person name="Suzuki M."/>
            <person name="Aoki J."/>
            <person name="Arakawa T."/>
            <person name="Iida J."/>
            <person name="Imamura K."/>
            <person name="Itoh M."/>
            <person name="Kato T."/>
            <person name="Kawaji H."/>
            <person name="Kawagashira N."/>
            <person name="Kawashima T."/>
            <person name="Kojima M."/>
            <person name="Kondo S."/>
            <person name="Konno H."/>
            <person name="Nakano K."/>
            <person name="Ninomiya N."/>
            <person name="Nishio T."/>
            <person name="Okada M."/>
            <person name="Plessy C."/>
            <person name="Shibata K."/>
            <person name="Shiraki T."/>
            <person name="Suzuki S."/>
            <person name="Tagami M."/>
            <person name="Waki K."/>
            <person name="Watahiki A."/>
            <person name="Okamura-Oho Y."/>
            <person name="Suzuki H."/>
            <person name="Kawai J."/>
            <person name="Hayashizaki Y."/>
        </authorList>
    </citation>
    <scope>NUCLEOTIDE SEQUENCE [LARGE SCALE MRNA]</scope>
    <source>
        <strain evidence="9">C57BL/6J</strain>
    </source>
</reference>
<reference key="3">
    <citation type="submission" date="2005-07" db="EMBL/GenBank/DDBJ databases">
        <authorList>
            <person name="Mural R.J."/>
            <person name="Adams M.D."/>
            <person name="Myers E.W."/>
            <person name="Smith H.O."/>
            <person name="Venter J.C."/>
        </authorList>
    </citation>
    <scope>NUCLEOTIDE SEQUENCE [LARGE SCALE GENOMIC DNA]</scope>
</reference>
<reference key="4">
    <citation type="journal article" date="2004" name="Genome Res.">
        <title>The status, quality, and expansion of the NIH full-length cDNA project: the Mammalian Gene Collection (MGC).</title>
        <authorList>
            <consortium name="The MGC Project Team"/>
        </authorList>
    </citation>
    <scope>NUCLEOTIDE SEQUENCE [LARGE SCALE MRNA]</scope>
    <source>
        <strain>FVB/N</strain>
        <tissue>Mammary gland</tissue>
    </source>
</reference>
<reference key="5">
    <citation type="journal article" date="2010" name="Cell">
        <title>A tissue-specific atlas of mouse protein phosphorylation and expression.</title>
        <authorList>
            <person name="Huttlin E.L."/>
            <person name="Jedrychowski M.P."/>
            <person name="Elias J.E."/>
            <person name="Goswami T."/>
            <person name="Rad R."/>
            <person name="Beausoleil S.A."/>
            <person name="Villen J."/>
            <person name="Haas W."/>
            <person name="Sowa M.E."/>
            <person name="Gygi S.P."/>
        </authorList>
    </citation>
    <scope>IDENTIFICATION BY MASS SPECTROMETRY [LARGE SCALE ANALYSIS]</scope>
    <source>
        <tissue>Brown adipose tissue</tissue>
        <tissue>Heart</tissue>
        <tissue>Kidney</tissue>
        <tissue>Liver</tissue>
        <tissue>Lung</tissue>
        <tissue>Spleen</tissue>
    </source>
</reference>
<reference key="6">
    <citation type="journal article" date="2014" name="Proc. Natl. Acad. Sci. U.S.A.">
        <title>Structural basis for the recruitment of glycogen synthase by glycogenin.</title>
        <authorList>
            <person name="Zeqiraj E."/>
            <person name="Tang X."/>
            <person name="Hunter R.W."/>
            <person name="Garcia-Rocha M."/>
            <person name="Judd A."/>
            <person name="Deak M."/>
            <person name="von Wilamowitz-Moellendorff A."/>
            <person name="Kurinov I."/>
            <person name="Guinovart J.J."/>
            <person name="Tyers M."/>
            <person name="Sakamoto K."/>
            <person name="Sicheri F."/>
        </authorList>
    </citation>
    <scope>INTERACTION WITH GYS2</scope>
    <scope>MUTAGENESIS OF LYS-305; TRP-308; TYR-315; PHE-321; ILE-324; LEU-328 AND LEU-332</scope>
</reference>
<feature type="initiator methionine" description="Removed" evidence="3">
    <location>
        <position position="1"/>
    </location>
</feature>
<feature type="chain" id="PRO_0000215177" description="Glycogenin-1" evidence="7">
    <location>
        <begin position="2"/>
        <end position="333"/>
    </location>
</feature>
<feature type="region of interest" description="Interaction with GYS1" evidence="3">
    <location>
        <begin position="284"/>
        <end position="316"/>
    </location>
</feature>
<feature type="region of interest" description="Disordered" evidence="4">
    <location>
        <begin position="290"/>
        <end position="316"/>
    </location>
</feature>
<feature type="binding site" evidence="3">
    <location>
        <position position="9"/>
    </location>
    <ligand>
        <name>UDP</name>
        <dbReference type="ChEBI" id="CHEBI:58223"/>
    </ligand>
</feature>
<feature type="binding site" evidence="3">
    <location>
        <position position="9"/>
    </location>
    <ligand>
        <name>UDP-alpha-D-glucose</name>
        <dbReference type="ChEBI" id="CHEBI:58885"/>
    </ligand>
</feature>
<feature type="binding site" evidence="3">
    <location>
        <position position="11"/>
    </location>
    <ligand>
        <name>UDP</name>
        <dbReference type="ChEBI" id="CHEBI:58223"/>
    </ligand>
</feature>
<feature type="binding site" evidence="3">
    <location>
        <position position="11"/>
    </location>
    <ligand>
        <name>UDP-alpha-D-glucose</name>
        <dbReference type="ChEBI" id="CHEBI:58885"/>
    </ligand>
</feature>
<feature type="binding site" evidence="3">
    <location>
        <position position="12"/>
    </location>
    <ligand>
        <name>UDP</name>
        <dbReference type="ChEBI" id="CHEBI:58223"/>
    </ligand>
</feature>
<feature type="binding site" evidence="2">
    <location>
        <position position="12"/>
    </location>
    <ligand>
        <name>UDP-alpha-D-glucose</name>
        <dbReference type="ChEBI" id="CHEBI:58885"/>
    </ligand>
</feature>
<feature type="binding site" evidence="3">
    <location>
        <position position="15"/>
    </location>
    <ligand>
        <name>UDP</name>
        <dbReference type="ChEBI" id="CHEBI:58223"/>
    </ligand>
</feature>
<feature type="binding site" evidence="3">
    <location>
        <position position="15"/>
    </location>
    <ligand>
        <name>UDP-alpha-D-glucose</name>
        <dbReference type="ChEBI" id="CHEBI:58885"/>
    </ligand>
</feature>
<feature type="binding site" evidence="3">
    <location>
        <position position="77"/>
    </location>
    <ligand>
        <name>UDP</name>
        <dbReference type="ChEBI" id="CHEBI:58223"/>
    </ligand>
</feature>
<feature type="binding site" evidence="3">
    <location>
        <position position="77"/>
    </location>
    <ligand>
        <name>UDP-alpha-D-glucose</name>
        <dbReference type="ChEBI" id="CHEBI:58885"/>
    </ligand>
</feature>
<feature type="binding site" evidence="3">
    <location>
        <position position="86"/>
    </location>
    <ligand>
        <name>UDP-alpha-D-glucose</name>
        <dbReference type="ChEBI" id="CHEBI:58885"/>
    </ligand>
</feature>
<feature type="binding site" evidence="3">
    <location>
        <position position="102"/>
    </location>
    <ligand>
        <name>Mn(2+)</name>
        <dbReference type="ChEBI" id="CHEBI:29035"/>
    </ligand>
</feature>
<feature type="binding site" evidence="2">
    <location>
        <position position="102"/>
    </location>
    <ligand>
        <name>UDP</name>
        <dbReference type="ChEBI" id="CHEBI:58223"/>
    </ligand>
</feature>
<feature type="binding site" evidence="3">
    <location>
        <position position="102"/>
    </location>
    <ligand>
        <name>UDP-alpha-D-glucose</name>
        <dbReference type="ChEBI" id="CHEBI:58885"/>
    </ligand>
</feature>
<feature type="binding site" evidence="3">
    <location>
        <position position="103"/>
    </location>
    <ligand>
        <name>UDP</name>
        <dbReference type="ChEBI" id="CHEBI:58223"/>
    </ligand>
</feature>
<feature type="binding site" evidence="3">
    <location>
        <position position="103"/>
    </location>
    <ligand>
        <name>UDP-alpha-D-glucose</name>
        <dbReference type="ChEBI" id="CHEBI:58885"/>
    </ligand>
</feature>
<feature type="binding site" evidence="3">
    <location>
        <position position="104"/>
    </location>
    <ligand>
        <name>Mn(2+)</name>
        <dbReference type="ChEBI" id="CHEBI:29035"/>
    </ligand>
</feature>
<feature type="binding site" evidence="3">
    <location>
        <position position="104"/>
    </location>
    <ligand>
        <name>UDP</name>
        <dbReference type="ChEBI" id="CHEBI:58223"/>
    </ligand>
</feature>
<feature type="binding site" evidence="3">
    <location>
        <position position="104"/>
    </location>
    <ligand>
        <name>UDP-alpha-D-glucose</name>
        <dbReference type="ChEBI" id="CHEBI:58885"/>
    </ligand>
</feature>
<feature type="binding site" evidence="3">
    <location>
        <position position="133"/>
    </location>
    <ligand>
        <name>UDP-alpha-D-glucose</name>
        <dbReference type="ChEBI" id="CHEBI:58885"/>
    </ligand>
</feature>
<feature type="binding site" evidence="3">
    <location>
        <position position="134"/>
    </location>
    <ligand>
        <name>UDP-alpha-D-glucose</name>
        <dbReference type="ChEBI" id="CHEBI:58885"/>
    </ligand>
</feature>
<feature type="binding site" evidence="3">
    <location>
        <position position="160"/>
    </location>
    <ligand>
        <name>UDP-alpha-D-glucose</name>
        <dbReference type="ChEBI" id="CHEBI:58885"/>
    </ligand>
</feature>
<feature type="binding site" evidence="3">
    <location>
        <position position="163"/>
    </location>
    <ligand>
        <name>UDP-alpha-D-glucose</name>
        <dbReference type="ChEBI" id="CHEBI:58885"/>
    </ligand>
</feature>
<feature type="binding site" evidence="3">
    <location>
        <position position="164"/>
    </location>
    <ligand>
        <name>UDP-alpha-D-glucose</name>
        <dbReference type="ChEBI" id="CHEBI:58885"/>
    </ligand>
</feature>
<feature type="binding site" evidence="3">
    <location>
        <position position="212"/>
    </location>
    <ligand>
        <name>Mn(2+)</name>
        <dbReference type="ChEBI" id="CHEBI:29035"/>
    </ligand>
</feature>
<feature type="binding site" evidence="2">
    <location>
        <position position="212"/>
    </location>
    <ligand>
        <name>UDP</name>
        <dbReference type="ChEBI" id="CHEBI:58223"/>
    </ligand>
</feature>
<feature type="binding site" evidence="3">
    <location>
        <position position="215"/>
    </location>
    <ligand>
        <name>UDP</name>
        <dbReference type="ChEBI" id="CHEBI:58223"/>
    </ligand>
</feature>
<feature type="binding site" evidence="3">
    <location>
        <position position="215"/>
    </location>
    <ligand>
        <name>UDP-alpha-D-glucose</name>
        <dbReference type="ChEBI" id="CHEBI:58885"/>
    </ligand>
</feature>
<feature type="binding site" evidence="3">
    <location>
        <position position="218"/>
    </location>
    <ligand>
        <name>UDP</name>
        <dbReference type="ChEBI" id="CHEBI:58223"/>
    </ligand>
</feature>
<feature type="binding site" evidence="3">
    <location>
        <position position="218"/>
    </location>
    <ligand>
        <name>UDP-alpha-D-glucose</name>
        <dbReference type="ChEBI" id="CHEBI:58885"/>
    </ligand>
</feature>
<feature type="site" description="Important for catalytic activity" evidence="2">
    <location>
        <position position="86"/>
    </location>
</feature>
<feature type="modified residue" description="N-acetylthreonine" evidence="3">
    <location>
        <position position="2"/>
    </location>
</feature>
<feature type="modified residue" description="Phosphoserine" evidence="2">
    <location>
        <position position="44"/>
    </location>
</feature>
<feature type="glycosylation site" description="O-linked (Glc...) tyrosine" evidence="2">
    <location>
        <position position="195"/>
    </location>
</feature>
<feature type="mutagenesis site" description="No loss of interaction with GYS2." evidence="6">
    <original>K</original>
    <variation>A</variation>
    <location>
        <position position="305"/>
    </location>
</feature>
<feature type="mutagenesis site" description="No loss of interaction with GYS2." evidence="6">
    <original>W</original>
    <variation>A</variation>
    <location>
        <position position="308"/>
    </location>
</feature>
<feature type="mutagenesis site" description="Severe loss of interaction with GYS2." evidence="6">
    <original>Y</original>
    <variation>A</variation>
    <location>
        <position position="315"/>
    </location>
</feature>
<feature type="mutagenesis site" description="Severe loss of interaction with GYS2." evidence="6">
    <original>F</original>
    <variation>A</variation>
    <location>
        <position position="321"/>
    </location>
</feature>
<feature type="mutagenesis site" description="Severe loss of interaction with GYS2." evidence="6">
    <original>I</original>
    <variation>A</variation>
    <location>
        <position position="324"/>
    </location>
</feature>
<feature type="mutagenesis site" description="Severe loss of interaction with GYS2." evidence="6">
    <original>L</original>
    <variation>A</variation>
    <location>
        <position position="328"/>
    </location>
</feature>
<feature type="mutagenesis site" description="No loss of interaction with GYS2." evidence="6">
    <original>L</original>
    <variation>A</variation>
    <location>
        <position position="332"/>
    </location>
</feature>
<sequence length="333" mass="37402">MTDQAFVTLTTNDAYAKGALVLGSSLKQHRTTRRMVVLTSPQVSDSMRKVLETVFDDVIMVDVLDSGDSAHLTLMKRPELGITLTKLHCWSLTQYSKCVFMDADTLVLSNIDDLFEREELSAAPDPGWPDCFNSGVFVYQPSIETYNQLLHLASEQGSFDGGDQGLLNTYFSGWATTDITKHLPFVYNLSSISIYSYLPAFKAFGKNAKVVHFLGRTKPWNYTYNPQTKSVNCDSQDPTVSHPEFLNLWWDTFTTNVLPLLQHHGLVKDASSYLMMEHVSGALSDLSFGEAPAAPQPSMSSEERKERWEQGQADYMGADSFDNIKRKLDTYLQ</sequence>